<proteinExistence type="inferred from homology"/>
<gene>
    <name type="ordered locus">BruAb2_0794</name>
</gene>
<name>Y3094_BRUAB</name>
<feature type="chain" id="PRO_0000328708" description="Putative peptide permease protein BruAb2_0794">
    <location>
        <begin position="1"/>
        <end position="302"/>
    </location>
</feature>
<feature type="transmembrane region" description="Helical" evidence="2">
    <location>
        <begin position="38"/>
        <end position="58"/>
    </location>
</feature>
<feature type="transmembrane region" description="Helical" evidence="2">
    <location>
        <begin position="101"/>
        <end position="121"/>
    </location>
</feature>
<feature type="transmembrane region" description="Helical" evidence="2">
    <location>
        <begin position="147"/>
        <end position="167"/>
    </location>
</feature>
<feature type="transmembrane region" description="Helical" evidence="2">
    <location>
        <begin position="230"/>
        <end position="250"/>
    </location>
</feature>
<feature type="transmembrane region" description="Helical" evidence="2">
    <location>
        <begin position="268"/>
        <end position="288"/>
    </location>
</feature>
<feature type="domain" description="ABC transmembrane type-1" evidence="2">
    <location>
        <begin position="97"/>
        <end position="288"/>
    </location>
</feature>
<feature type="region of interest" description="Disordered" evidence="3">
    <location>
        <begin position="1"/>
        <end position="22"/>
    </location>
</feature>
<dbReference type="EMBL" id="AE017224">
    <property type="protein sequence ID" value="AAX76187.1"/>
    <property type="status" value="ALT_INIT"/>
    <property type="molecule type" value="Genomic_DNA"/>
</dbReference>
<dbReference type="SMR" id="Q577J7"/>
<dbReference type="EnsemblBacteria" id="AAX76187">
    <property type="protein sequence ID" value="AAX76187"/>
    <property type="gene ID" value="BruAb2_0794"/>
</dbReference>
<dbReference type="KEGG" id="bmb:BruAb2_0794"/>
<dbReference type="HOGENOM" id="CLU_028518_1_1_5"/>
<dbReference type="Proteomes" id="UP000000540">
    <property type="component" value="Chromosome II"/>
</dbReference>
<dbReference type="GO" id="GO:0005886">
    <property type="term" value="C:plasma membrane"/>
    <property type="evidence" value="ECO:0007669"/>
    <property type="project" value="UniProtKB-SubCell"/>
</dbReference>
<dbReference type="GO" id="GO:0015833">
    <property type="term" value="P:peptide transport"/>
    <property type="evidence" value="ECO:0007669"/>
    <property type="project" value="UniProtKB-KW"/>
</dbReference>
<dbReference type="GO" id="GO:0015031">
    <property type="term" value="P:protein transport"/>
    <property type="evidence" value="ECO:0007669"/>
    <property type="project" value="UniProtKB-KW"/>
</dbReference>
<dbReference type="GO" id="GO:0055085">
    <property type="term" value="P:transmembrane transport"/>
    <property type="evidence" value="ECO:0007669"/>
    <property type="project" value="InterPro"/>
</dbReference>
<dbReference type="CDD" id="cd06261">
    <property type="entry name" value="TM_PBP2"/>
    <property type="match status" value="1"/>
</dbReference>
<dbReference type="Gene3D" id="1.10.3720.10">
    <property type="entry name" value="MetI-like"/>
    <property type="match status" value="1"/>
</dbReference>
<dbReference type="InterPro" id="IPR050366">
    <property type="entry name" value="BP-dependent_transpt_permease"/>
</dbReference>
<dbReference type="InterPro" id="IPR000515">
    <property type="entry name" value="MetI-like"/>
</dbReference>
<dbReference type="InterPro" id="IPR035906">
    <property type="entry name" value="MetI-like_sf"/>
</dbReference>
<dbReference type="InterPro" id="IPR025966">
    <property type="entry name" value="OppC_N"/>
</dbReference>
<dbReference type="PANTHER" id="PTHR43386:SF1">
    <property type="entry name" value="D,D-DIPEPTIDE TRANSPORT SYSTEM PERMEASE PROTEIN DDPC-RELATED"/>
    <property type="match status" value="1"/>
</dbReference>
<dbReference type="PANTHER" id="PTHR43386">
    <property type="entry name" value="OLIGOPEPTIDE TRANSPORT SYSTEM PERMEASE PROTEIN APPC"/>
    <property type="match status" value="1"/>
</dbReference>
<dbReference type="Pfam" id="PF00528">
    <property type="entry name" value="BPD_transp_1"/>
    <property type="match status" value="1"/>
</dbReference>
<dbReference type="Pfam" id="PF12911">
    <property type="entry name" value="OppC_N"/>
    <property type="match status" value="1"/>
</dbReference>
<dbReference type="SUPFAM" id="SSF161098">
    <property type="entry name" value="MetI-like"/>
    <property type="match status" value="1"/>
</dbReference>
<dbReference type="PROSITE" id="PS50928">
    <property type="entry name" value="ABC_TM1"/>
    <property type="match status" value="1"/>
</dbReference>
<keyword id="KW-0997">Cell inner membrane</keyword>
<keyword id="KW-1003">Cell membrane</keyword>
<keyword id="KW-0472">Membrane</keyword>
<keyword id="KW-0571">Peptide transport</keyword>
<keyword id="KW-0653">Protein transport</keyword>
<keyword id="KW-0812">Transmembrane</keyword>
<keyword id="KW-1133">Transmembrane helix</keyword>
<keyword id="KW-0813">Transport</keyword>
<organism>
    <name type="scientific">Brucella abortus biovar 1 (strain 9-941)</name>
    <dbReference type="NCBI Taxonomy" id="262698"/>
    <lineage>
        <taxon>Bacteria</taxon>
        <taxon>Pseudomonadati</taxon>
        <taxon>Pseudomonadota</taxon>
        <taxon>Alphaproteobacteria</taxon>
        <taxon>Hyphomicrobiales</taxon>
        <taxon>Brucellaceae</taxon>
        <taxon>Brucella/Ochrobactrum group</taxon>
        <taxon>Brucella</taxon>
    </lineage>
</organism>
<comment type="function">
    <text evidence="1">Probably part of an ABC transporter complex that could be involved in peptide import. Probably responsible for the translocation of the substrate across the membrane (By similarity).</text>
</comment>
<comment type="subunit">
    <text evidence="4">The complex is composed of two ATP-binding proteins (BruAb2_0796 and BruAb2_0797), two transmembrane proteins (BruAb2_0794) and a solute-binding protein (BruAb2_0792).</text>
</comment>
<comment type="subcellular location">
    <subcellularLocation>
        <location evidence="4">Cell inner membrane</location>
        <topology evidence="2">Multi-pass membrane protein</topology>
    </subcellularLocation>
</comment>
<comment type="similarity">
    <text evidence="4">Belongs to the binding-protein-dependent transport system permease family.</text>
</comment>
<comment type="sequence caution" evidence="4">
    <conflict type="erroneous initiation">
        <sequence resource="EMBL-CDS" id="AAX76187"/>
    </conflict>
</comment>
<evidence type="ECO:0000250" key="1"/>
<evidence type="ECO:0000255" key="2">
    <source>
        <dbReference type="PROSITE-ProRule" id="PRU00441"/>
    </source>
</evidence>
<evidence type="ECO:0000256" key="3">
    <source>
        <dbReference type="SAM" id="MobiDB-lite"/>
    </source>
</evidence>
<evidence type="ECO:0000305" key="4"/>
<accession>Q577J7</accession>
<reference key="1">
    <citation type="journal article" date="2005" name="J. Bacteriol.">
        <title>Completion of the genome sequence of Brucella abortus and comparison to the highly similar genomes of Brucella melitensis and Brucella suis.</title>
        <authorList>
            <person name="Halling S.M."/>
            <person name="Peterson-Burch B.D."/>
            <person name="Bricker B.J."/>
            <person name="Zuerner R.L."/>
            <person name="Qing Z."/>
            <person name="Li L.-L."/>
            <person name="Kapur V."/>
            <person name="Alt D.P."/>
            <person name="Olsen S.C."/>
        </authorList>
    </citation>
    <scope>NUCLEOTIDE SEQUENCE [LARGE SCALE GENOMIC DNA]</scope>
    <source>
        <strain>9-941</strain>
    </source>
</reference>
<protein>
    <recommendedName>
        <fullName>Putative peptide permease protein BruAb2_0794</fullName>
    </recommendedName>
</protein>
<sequence>MRSSIHASRLRKMGQSIPASTGPMARSANRFLQNRAAIFGLVLLTPLLFAVLTYPLWLPYKPNDIDLMAMNSAPSWKHWFGTDGVGRDVFARTMEGGRISLLVAVSSVVLSTAIGFLIGAISALGGRWADAIAMRSVDLAMTLPPVIFLLVLASIIGSGIWSTVVVIALLSWPVLSRMIRARLLELREREFVMASRGMGAGLGHLLFRHGLPNSIDILVVYATLQVANAILLEAGLSFLGLGVPPPAASWSNMLNAARSTAVLEQFPWQWLFPGGALVLAVLAINFIGDGLRDAFDPRAELN</sequence>